<gene>
    <name evidence="1" type="primary">mutH</name>
    <name type="ordered locus">YPK_1032</name>
</gene>
<protein>
    <recommendedName>
        <fullName evidence="1">DNA mismatch repair protein MutH</fullName>
    </recommendedName>
    <alternativeName>
        <fullName evidence="1">Methyl-directed mismatch repair protein</fullName>
    </alternativeName>
</protein>
<organism>
    <name type="scientific">Yersinia pseudotuberculosis serotype O:3 (strain YPIII)</name>
    <dbReference type="NCBI Taxonomy" id="502800"/>
    <lineage>
        <taxon>Bacteria</taxon>
        <taxon>Pseudomonadati</taxon>
        <taxon>Pseudomonadota</taxon>
        <taxon>Gammaproteobacteria</taxon>
        <taxon>Enterobacterales</taxon>
        <taxon>Yersiniaceae</taxon>
        <taxon>Yersinia</taxon>
    </lineage>
</organism>
<comment type="function">
    <text evidence="1">Sequence-specific endonuclease that cleaves unmethylated GATC sequences. It is involved in DNA mismatch repair.</text>
</comment>
<comment type="subcellular location">
    <subcellularLocation>
        <location evidence="1">Cytoplasm</location>
    </subcellularLocation>
</comment>
<comment type="similarity">
    <text evidence="1">Belongs to the MutH family.</text>
</comment>
<proteinExistence type="inferred from homology"/>
<accession>B1JQC6</accession>
<feature type="chain" id="PRO_1000133481" description="DNA mismatch repair protein MutH">
    <location>
        <begin position="1"/>
        <end position="228"/>
    </location>
</feature>
<evidence type="ECO:0000255" key="1">
    <source>
        <dbReference type="HAMAP-Rule" id="MF_00759"/>
    </source>
</evidence>
<reference key="1">
    <citation type="submission" date="2008-02" db="EMBL/GenBank/DDBJ databases">
        <title>Complete sequence of Yersinia pseudotuberculosis YPIII.</title>
        <authorList>
            <consortium name="US DOE Joint Genome Institute"/>
            <person name="Copeland A."/>
            <person name="Lucas S."/>
            <person name="Lapidus A."/>
            <person name="Glavina del Rio T."/>
            <person name="Dalin E."/>
            <person name="Tice H."/>
            <person name="Bruce D."/>
            <person name="Goodwin L."/>
            <person name="Pitluck S."/>
            <person name="Munk A.C."/>
            <person name="Brettin T."/>
            <person name="Detter J.C."/>
            <person name="Han C."/>
            <person name="Tapia R."/>
            <person name="Schmutz J."/>
            <person name="Larimer F."/>
            <person name="Land M."/>
            <person name="Hauser L."/>
            <person name="Challacombe J.F."/>
            <person name="Green L."/>
            <person name="Lindler L.E."/>
            <person name="Nikolich M.P."/>
            <person name="Richardson P."/>
        </authorList>
    </citation>
    <scope>NUCLEOTIDE SEQUENCE [LARGE SCALE GENOMIC DNA]</scope>
    <source>
        <strain>YPIII</strain>
    </source>
</reference>
<sequence length="228" mass="25332">MSVYSLPPAPPSDEHQLFQRAQALSGFTLGELATRAQWVIPADLKRVKGWVGMLLEFYLGASAGSKPEQDFADIGIELKTIPISAQGKPLETTFVCVAPLTGNSGVTWESSHVRHKLARVLWVPVEGERHIPLAERRVGAPLLWSPNVEEEELLRRDWEELMDLIVLGKVESITARHGQVLQLRPKAANSRALTEAIGEFGQPIMTLPRGFYLKKTLTAPMLARHFLL</sequence>
<keyword id="KW-0963">Cytoplasm</keyword>
<keyword id="KW-0227">DNA damage</keyword>
<keyword id="KW-0234">DNA repair</keyword>
<keyword id="KW-0255">Endonuclease</keyword>
<keyword id="KW-0378">Hydrolase</keyword>
<keyword id="KW-0540">Nuclease</keyword>
<dbReference type="EMBL" id="CP000950">
    <property type="protein sequence ID" value="ACA67333.1"/>
    <property type="molecule type" value="Genomic_DNA"/>
</dbReference>
<dbReference type="RefSeq" id="WP_002209838.1">
    <property type="nucleotide sequence ID" value="NZ_CP009792.1"/>
</dbReference>
<dbReference type="SMR" id="B1JQC6"/>
<dbReference type="GeneID" id="57973847"/>
<dbReference type="KEGG" id="ypy:YPK_1032"/>
<dbReference type="PATRIC" id="fig|502800.11.peg.1664"/>
<dbReference type="GO" id="GO:0005737">
    <property type="term" value="C:cytoplasm"/>
    <property type="evidence" value="ECO:0007669"/>
    <property type="project" value="UniProtKB-SubCell"/>
</dbReference>
<dbReference type="GO" id="GO:0003677">
    <property type="term" value="F:DNA binding"/>
    <property type="evidence" value="ECO:0007669"/>
    <property type="project" value="InterPro"/>
</dbReference>
<dbReference type="GO" id="GO:0004519">
    <property type="term" value="F:endonuclease activity"/>
    <property type="evidence" value="ECO:0007669"/>
    <property type="project" value="UniProtKB-UniRule"/>
</dbReference>
<dbReference type="GO" id="GO:0006304">
    <property type="term" value="P:DNA modification"/>
    <property type="evidence" value="ECO:0007669"/>
    <property type="project" value="InterPro"/>
</dbReference>
<dbReference type="GO" id="GO:0006298">
    <property type="term" value="P:mismatch repair"/>
    <property type="evidence" value="ECO:0007669"/>
    <property type="project" value="UniProtKB-UniRule"/>
</dbReference>
<dbReference type="CDD" id="cd00583">
    <property type="entry name" value="MutH-like"/>
    <property type="match status" value="1"/>
</dbReference>
<dbReference type="FunFam" id="3.40.600.10:FF:000001">
    <property type="entry name" value="DNA mismatch repair protein MutH"/>
    <property type="match status" value="1"/>
</dbReference>
<dbReference type="Gene3D" id="3.40.600.10">
    <property type="entry name" value="DNA mismatch repair MutH/Restriction endonuclease, type II"/>
    <property type="match status" value="1"/>
</dbReference>
<dbReference type="HAMAP" id="MF_00759">
    <property type="entry name" value="MutH"/>
    <property type="match status" value="1"/>
</dbReference>
<dbReference type="InterPro" id="IPR004230">
    <property type="entry name" value="DNA_mismatch_repair_MutH"/>
</dbReference>
<dbReference type="InterPro" id="IPR011337">
    <property type="entry name" value="DNA_rep_MutH/RE_typeII_Sau3AI"/>
</dbReference>
<dbReference type="InterPro" id="IPR037057">
    <property type="entry name" value="DNA_rep_MutH/T2_RE_sf"/>
</dbReference>
<dbReference type="InterPro" id="IPR011335">
    <property type="entry name" value="Restrct_endonuc-II-like"/>
</dbReference>
<dbReference type="NCBIfam" id="TIGR02248">
    <property type="entry name" value="mutH_TIGR"/>
    <property type="match status" value="1"/>
</dbReference>
<dbReference type="NCBIfam" id="NF003458">
    <property type="entry name" value="PRK05070.1"/>
    <property type="match status" value="1"/>
</dbReference>
<dbReference type="Pfam" id="PF02976">
    <property type="entry name" value="MutH"/>
    <property type="match status" value="1"/>
</dbReference>
<dbReference type="SMART" id="SM00927">
    <property type="entry name" value="MutH"/>
    <property type="match status" value="1"/>
</dbReference>
<dbReference type="SUPFAM" id="SSF52980">
    <property type="entry name" value="Restriction endonuclease-like"/>
    <property type="match status" value="1"/>
</dbReference>
<name>MUTH_YERPY</name>